<feature type="chain" id="PRO_0000300747" description="Signal recognition particle 19 kDa protein">
    <location>
        <begin position="1"/>
        <end position="101"/>
    </location>
</feature>
<proteinExistence type="inferred from homology"/>
<accession>Q46D06</accession>
<evidence type="ECO:0000255" key="1">
    <source>
        <dbReference type="HAMAP-Rule" id="MF_00305"/>
    </source>
</evidence>
<evidence type="ECO:0000305" key="2"/>
<sequence>MRDRGKLVIWPVYLDQTKSRSSGRIISRKNAIKEPQLNEIKEAARQLGLNPEVEPHKAYPKSWWEVSGRVLVDDNGPKTVIAKQIALAIKKMRGPESSAKA</sequence>
<comment type="function">
    <text evidence="1">Involved in targeting and insertion of nascent membrane proteins into the cytoplasmic membrane. Binds directly to 7S RNA and mediates binding of the 54 kDa subunit of the SRP.</text>
</comment>
<comment type="subunit">
    <text evidence="1">Part of the signal recognition particle protein translocation system, which is composed of SRP and FtsY. Archaeal SRP consists of a 7S RNA molecule of 300 nucleotides and two protein subunits: SRP54 and SRP19.</text>
</comment>
<comment type="subcellular location">
    <subcellularLocation>
        <location evidence="1">Cytoplasm</location>
    </subcellularLocation>
</comment>
<comment type="similarity">
    <text evidence="1">Belongs to the SRP19 family.</text>
</comment>
<comment type="sequence caution" evidence="2">
    <conflict type="erroneous initiation">
        <sequence resource="EMBL-CDS" id="AAZ70236"/>
    </conflict>
    <text>Extended N-terminus.</text>
</comment>
<reference key="1">
    <citation type="journal article" date="2006" name="J. Bacteriol.">
        <title>The Methanosarcina barkeri genome: comparative analysis with Methanosarcina acetivorans and Methanosarcina mazei reveals extensive rearrangement within methanosarcinal genomes.</title>
        <authorList>
            <person name="Maeder D.L."/>
            <person name="Anderson I."/>
            <person name="Brettin T.S."/>
            <person name="Bruce D.C."/>
            <person name="Gilna P."/>
            <person name="Han C.S."/>
            <person name="Lapidus A."/>
            <person name="Metcalf W.W."/>
            <person name="Saunders E."/>
            <person name="Tapia R."/>
            <person name="Sowers K.R."/>
        </authorList>
    </citation>
    <scope>NUCLEOTIDE SEQUENCE [LARGE SCALE GENOMIC DNA]</scope>
    <source>
        <strain>Fusaro / DSM 804</strain>
    </source>
</reference>
<gene>
    <name evidence="1" type="primary">srp19</name>
    <name type="ordered locus">Mbar_A1273</name>
</gene>
<keyword id="KW-0963">Cytoplasm</keyword>
<keyword id="KW-0687">Ribonucleoprotein</keyword>
<keyword id="KW-0694">RNA-binding</keyword>
<keyword id="KW-0733">Signal recognition particle</keyword>
<protein>
    <recommendedName>
        <fullName evidence="1">Signal recognition particle 19 kDa protein</fullName>
        <shortName evidence="1">SRP19</shortName>
    </recommendedName>
</protein>
<name>SRP19_METBF</name>
<organism>
    <name type="scientific">Methanosarcina barkeri (strain Fusaro / DSM 804)</name>
    <dbReference type="NCBI Taxonomy" id="269797"/>
    <lineage>
        <taxon>Archaea</taxon>
        <taxon>Methanobacteriati</taxon>
        <taxon>Methanobacteriota</taxon>
        <taxon>Stenosarchaea group</taxon>
        <taxon>Methanomicrobia</taxon>
        <taxon>Methanosarcinales</taxon>
        <taxon>Methanosarcinaceae</taxon>
        <taxon>Methanosarcina</taxon>
    </lineage>
</organism>
<dbReference type="EMBL" id="CP000099">
    <property type="protein sequence ID" value="AAZ70236.1"/>
    <property type="status" value="ALT_INIT"/>
    <property type="molecule type" value="Genomic_DNA"/>
</dbReference>
<dbReference type="SMR" id="Q46D06"/>
<dbReference type="STRING" id="269797.Mbar_A1273"/>
<dbReference type="PaxDb" id="269797-Mbar_A1273"/>
<dbReference type="KEGG" id="mba:Mbar_A1273"/>
<dbReference type="eggNOG" id="arCOG01217">
    <property type="taxonomic scope" value="Archaea"/>
</dbReference>
<dbReference type="HOGENOM" id="CLU_169299_1_0_2"/>
<dbReference type="OrthoDB" id="56356at2157"/>
<dbReference type="GO" id="GO:0048500">
    <property type="term" value="C:signal recognition particle"/>
    <property type="evidence" value="ECO:0007669"/>
    <property type="project" value="UniProtKB-UniRule"/>
</dbReference>
<dbReference type="GO" id="GO:0008312">
    <property type="term" value="F:7S RNA binding"/>
    <property type="evidence" value="ECO:0007669"/>
    <property type="project" value="UniProtKB-UniRule"/>
</dbReference>
<dbReference type="GO" id="GO:0006617">
    <property type="term" value="P:SRP-dependent cotranslational protein targeting to membrane, signal sequence recognition"/>
    <property type="evidence" value="ECO:0007669"/>
    <property type="project" value="TreeGrafter"/>
</dbReference>
<dbReference type="Gene3D" id="3.30.56.30">
    <property type="entry name" value="Signal recognition particle, SRP19-like subunit"/>
    <property type="match status" value="1"/>
</dbReference>
<dbReference type="HAMAP" id="MF_00305">
    <property type="entry name" value="SRP19"/>
    <property type="match status" value="1"/>
</dbReference>
<dbReference type="InterPro" id="IPR002778">
    <property type="entry name" value="Signal_recog_particle_SRP19"/>
</dbReference>
<dbReference type="InterPro" id="IPR036521">
    <property type="entry name" value="SRP19-like_sf"/>
</dbReference>
<dbReference type="InterPro" id="IPR022938">
    <property type="entry name" value="SRP19_arc-type"/>
</dbReference>
<dbReference type="NCBIfam" id="NF001973">
    <property type="entry name" value="PRK00754.1"/>
    <property type="match status" value="1"/>
</dbReference>
<dbReference type="PANTHER" id="PTHR17453">
    <property type="entry name" value="SIGNAL RECOGNITION PARTICLE 19 KD PROTEIN"/>
    <property type="match status" value="1"/>
</dbReference>
<dbReference type="PANTHER" id="PTHR17453:SF0">
    <property type="entry name" value="SIGNAL RECOGNITION PARTICLE 19 KDA PROTEIN"/>
    <property type="match status" value="1"/>
</dbReference>
<dbReference type="Pfam" id="PF01922">
    <property type="entry name" value="SRP19"/>
    <property type="match status" value="1"/>
</dbReference>
<dbReference type="SUPFAM" id="SSF69695">
    <property type="entry name" value="SRP19"/>
    <property type="match status" value="1"/>
</dbReference>